<accession>Q2HJ23</accession>
<proteinExistence type="evidence at transcript level"/>
<name>MLP3A_BOVIN</name>
<reference key="1">
    <citation type="submission" date="2006-02" db="EMBL/GenBank/DDBJ databases">
        <authorList>
            <consortium name="NIH - Mammalian Gene Collection (MGC) project"/>
        </authorList>
    </citation>
    <scope>NUCLEOTIDE SEQUENCE [LARGE SCALE MRNA]</scope>
    <source>
        <strain>Hereford</strain>
        <tissue>Uterus</tissue>
    </source>
</reference>
<comment type="function">
    <text evidence="3">Ubiquitin-like modifier involved in formation of autophagosomal vacuoles (autophagosomes). While LC3s are involved in elongation of the phagophore membrane, the GABARAP/GATE-16 subfamily is essential for a later stage in autophagosome maturation. Through its interaction with the reticulophagy receptor TEX264, participates in the remodeling of subdomains of the endoplasmic reticulum into autophagosomes upon nutrient stress, which then fuse with lysosomes for endoplasmic reticulum turnover.</text>
</comment>
<comment type="subunit">
    <text evidence="1 3">3 different light chains, LC1 (a cleavage product of MAP1B), LC2 (a cleavage product of MAP1A) and LC3 (produced by one of the MAP1LC3 genes), can associate with the MAP1A or MAP1B heavy chains (By similarity). Interacts with TP53INP1 and TP53INP2. Directly interacts with SQSTM1; this interaction leads to MAP1LC3A recruitment to inclusion bodies containing polyubiquitinated protein aggregates and to inclusion body degradation by autophagy. Interacts with ATG13. Interacts with ULK1. Interacts with TBC1D5. Found in a complex with UBQLN1 and UBQLN2. Interacts with UBQLN4 (via STI1 1 and 2 domains). Interacts with UBQLN1 in the presence of UBQLN4. Interacts with TRIM5. Interacts with MEFV. Interacts with reticulophagy regulators RETREG1, RETREG2 and RETREG3. Interacts with PICALM. Interacts with the reticulophagy receptor TEX264. Interacts with MOAP1 (via LIR motif) (By similarity). Interacts with IRGM (By similarity). Interacts with ATG3 (By similarity). Interacts with SPART (By similarity).</text>
</comment>
<comment type="subcellular location">
    <subcellularLocation>
        <location evidence="3">Endomembrane system</location>
        <topology evidence="3">Lipid-anchor</topology>
    </subcellularLocation>
    <subcellularLocation>
        <location evidence="3">Cytoplasmic vesicle</location>
        <location evidence="3">Autophagosome membrane</location>
        <topology evidence="3">Lipid-anchor</topology>
    </subcellularLocation>
    <subcellularLocation>
        <location evidence="3">Cytoplasmic vesicle</location>
        <location evidence="3">Autophagosome</location>
    </subcellularLocation>
    <subcellularLocation>
        <location evidence="2">Cytoplasm</location>
        <location evidence="2">Cytoskeleton</location>
    </subcellularLocation>
    <text evidence="3">LC3-II binds to the autophagic membranes.</text>
</comment>
<comment type="PTM">
    <text evidence="2 3">The precursor molecule is cleaved by ATG4 (ATG4A, ATG4B, ATG4C or ATG4D) to expose the glycine at the C-terminus and form the cytosolic form, LC3-I. The processed form is then activated by APG7L/ATG7, transferred to ATG3 and conjugated to phosphatidylethanolamine (PE) phospholipid to form the membrane-bound form, LC3-II. During non-canonical autophagy, the processed form is conjugated to phosphatidylserine (PS) phospholipid. ATG4 proteins also mediate the delipidation of PE-conjugated forms. In addition, ATG4B and ATG4D mediate delipidation of ATG8 proteins conjugated to PS during non-canonical autophagy. ATG4B constitutes the major protein for proteolytic activation (By similarity). ATG4D is the main enzyme for delipidation activity (By similarity).</text>
</comment>
<comment type="PTM">
    <text evidence="3">Phosphorylation at Ser-12 by PKA inhibits conjugation to phosphatidylethanolamine (PE).</text>
</comment>
<comment type="PTM">
    <text evidence="2 3">The precursor molecule is cleaved by ATG4 (ATG4A, ATG4B, ATG4C or ATG4D) to expose the glycine at the C-terminus and form the cytosolic form, LC3-I. The processed form is then activated by APG7L/ATG7, transferred to ATG3 and conjugated to phosphatidylethanolamine (PE) phospholipid to form the membrane-bound form, LC3-II (By similarity). During non-canonical autophagy, the processed form is conjugated to phosphatidylserine (PS) phospholipid. ATG4 proteins also mediate the delipidation of PE-conjugated forms. In addition, ATG4B and ATG4D mediate delipidation of ATG8 proteins conjugated to PS during non-canonical autophagy. ATG4B constitutes the major protein for proteolytic activation (By similarity). ATG4D is the main enzyme for delipidation activity (By similarity).</text>
</comment>
<comment type="similarity">
    <text evidence="4">Belongs to the ATG8 family.</text>
</comment>
<organism>
    <name type="scientific">Bos taurus</name>
    <name type="common">Bovine</name>
    <dbReference type="NCBI Taxonomy" id="9913"/>
    <lineage>
        <taxon>Eukaryota</taxon>
        <taxon>Metazoa</taxon>
        <taxon>Chordata</taxon>
        <taxon>Craniata</taxon>
        <taxon>Vertebrata</taxon>
        <taxon>Euteleostomi</taxon>
        <taxon>Mammalia</taxon>
        <taxon>Eutheria</taxon>
        <taxon>Laurasiatheria</taxon>
        <taxon>Artiodactyla</taxon>
        <taxon>Ruminantia</taxon>
        <taxon>Pecora</taxon>
        <taxon>Bovidae</taxon>
        <taxon>Bovinae</taxon>
        <taxon>Bos</taxon>
    </lineage>
</organism>
<dbReference type="EMBL" id="BC113348">
    <property type="protein sequence ID" value="AAI13349.1"/>
    <property type="molecule type" value="mRNA"/>
</dbReference>
<dbReference type="RefSeq" id="NP_001039640.1">
    <property type="nucleotide sequence ID" value="NM_001046175.1"/>
</dbReference>
<dbReference type="RefSeq" id="XP_005214753.1">
    <property type="nucleotide sequence ID" value="XM_005214696.3"/>
</dbReference>
<dbReference type="SMR" id="Q2HJ23"/>
<dbReference type="FunCoup" id="Q2HJ23">
    <property type="interactions" value="737"/>
</dbReference>
<dbReference type="PaxDb" id="9913-ENSBTAP00000008072"/>
<dbReference type="Ensembl" id="ENSBTAT00000008072.4">
    <property type="protein sequence ID" value="ENSBTAP00000008072.3"/>
    <property type="gene ID" value="ENSBTAG00000006135.5"/>
</dbReference>
<dbReference type="GeneID" id="514547"/>
<dbReference type="KEGG" id="bta:514547"/>
<dbReference type="CTD" id="84557"/>
<dbReference type="VEuPathDB" id="HostDB:ENSBTAG00000006135"/>
<dbReference type="VGNC" id="VGNC:31179">
    <property type="gene designation" value="MAP1LC3A"/>
</dbReference>
<dbReference type="eggNOG" id="KOG1654">
    <property type="taxonomic scope" value="Eukaryota"/>
</dbReference>
<dbReference type="GeneTree" id="ENSGT00940000158853"/>
<dbReference type="HOGENOM" id="CLU_119276_1_0_1"/>
<dbReference type="InParanoid" id="Q2HJ23"/>
<dbReference type="OMA" id="VNERSMV"/>
<dbReference type="OrthoDB" id="6738456at2759"/>
<dbReference type="TreeFam" id="TF312964"/>
<dbReference type="Reactome" id="R-BTA-1632852">
    <property type="pathway name" value="Macroautophagy"/>
</dbReference>
<dbReference type="Reactome" id="R-BTA-5205685">
    <property type="pathway name" value="PINK1-PRKN Mediated Mitophagy"/>
</dbReference>
<dbReference type="Reactome" id="R-BTA-8934903">
    <property type="pathway name" value="Receptor Mediated Mitophagy"/>
</dbReference>
<dbReference type="Proteomes" id="UP000009136">
    <property type="component" value="Chromosome 13"/>
</dbReference>
<dbReference type="Bgee" id="ENSBTAG00000006135">
    <property type="expression patterns" value="Expressed in Ammon's horn and 107 other cell types or tissues"/>
</dbReference>
<dbReference type="GO" id="GO:0044754">
    <property type="term" value="C:autolysosome"/>
    <property type="evidence" value="ECO:0007669"/>
    <property type="project" value="Ensembl"/>
</dbReference>
<dbReference type="GO" id="GO:0005776">
    <property type="term" value="C:autophagosome"/>
    <property type="evidence" value="ECO:0000250"/>
    <property type="project" value="UniProtKB"/>
</dbReference>
<dbReference type="GO" id="GO:0000421">
    <property type="term" value="C:autophagosome membrane"/>
    <property type="evidence" value="ECO:0000318"/>
    <property type="project" value="GO_Central"/>
</dbReference>
<dbReference type="GO" id="GO:0031410">
    <property type="term" value="C:cytoplasmic vesicle"/>
    <property type="evidence" value="ECO:0007669"/>
    <property type="project" value="UniProtKB-KW"/>
</dbReference>
<dbReference type="GO" id="GO:0005829">
    <property type="term" value="C:cytosol"/>
    <property type="evidence" value="ECO:0000250"/>
    <property type="project" value="UniProtKB"/>
</dbReference>
<dbReference type="GO" id="GO:0012505">
    <property type="term" value="C:endomembrane system"/>
    <property type="evidence" value="ECO:0007669"/>
    <property type="project" value="UniProtKB-SubCell"/>
</dbReference>
<dbReference type="GO" id="GO:0005874">
    <property type="term" value="C:microtubule"/>
    <property type="evidence" value="ECO:0007669"/>
    <property type="project" value="UniProtKB-KW"/>
</dbReference>
<dbReference type="GO" id="GO:0031090">
    <property type="term" value="C:organelle membrane"/>
    <property type="evidence" value="ECO:0000250"/>
    <property type="project" value="UniProtKB"/>
</dbReference>
<dbReference type="GO" id="GO:0008017">
    <property type="term" value="F:microtubule binding"/>
    <property type="evidence" value="ECO:0000318"/>
    <property type="project" value="GO_Central"/>
</dbReference>
<dbReference type="GO" id="GO:0008429">
    <property type="term" value="F:phosphatidylethanolamine binding"/>
    <property type="evidence" value="ECO:0000318"/>
    <property type="project" value="GO_Central"/>
</dbReference>
<dbReference type="GO" id="GO:0005543">
    <property type="term" value="F:phospholipid binding"/>
    <property type="evidence" value="ECO:0000250"/>
    <property type="project" value="UniProtKB"/>
</dbReference>
<dbReference type="GO" id="GO:0031625">
    <property type="term" value="F:ubiquitin protein ligase binding"/>
    <property type="evidence" value="ECO:0000318"/>
    <property type="project" value="GO_Central"/>
</dbReference>
<dbReference type="GO" id="GO:0000045">
    <property type="term" value="P:autophagosome assembly"/>
    <property type="evidence" value="ECO:0000250"/>
    <property type="project" value="UniProtKB"/>
</dbReference>
<dbReference type="GO" id="GO:0097352">
    <property type="term" value="P:autophagosome maturation"/>
    <property type="evidence" value="ECO:0000318"/>
    <property type="project" value="GO_Central"/>
</dbReference>
<dbReference type="GO" id="GO:0006995">
    <property type="term" value="P:cellular response to nitrogen starvation"/>
    <property type="evidence" value="ECO:0000318"/>
    <property type="project" value="GO_Central"/>
</dbReference>
<dbReference type="GO" id="GO:0000423">
    <property type="term" value="P:mitophagy"/>
    <property type="evidence" value="ECO:0000318"/>
    <property type="project" value="GO_Central"/>
</dbReference>
<dbReference type="CDD" id="cd17234">
    <property type="entry name" value="Ubl_ATG8_MAP1LC3A"/>
    <property type="match status" value="1"/>
</dbReference>
<dbReference type="FunFam" id="3.10.20.90:FF:000059">
    <property type="entry name" value="Microtubule-associated proteins 1A/1B light chain 3B"/>
    <property type="match status" value="1"/>
</dbReference>
<dbReference type="Gene3D" id="3.10.20.90">
    <property type="entry name" value="Phosphatidylinositol 3-kinase Catalytic Subunit, Chain A, domain 1"/>
    <property type="match status" value="1"/>
</dbReference>
<dbReference type="InterPro" id="IPR004241">
    <property type="entry name" value="Atg8-like"/>
</dbReference>
<dbReference type="InterPro" id="IPR029071">
    <property type="entry name" value="Ubiquitin-like_domsf"/>
</dbReference>
<dbReference type="PANTHER" id="PTHR10969">
    <property type="entry name" value="MICROTUBULE-ASSOCIATED PROTEINS 1A/1B LIGHT CHAIN 3-RELATED"/>
    <property type="match status" value="1"/>
</dbReference>
<dbReference type="Pfam" id="PF02991">
    <property type="entry name" value="ATG8"/>
    <property type="match status" value="1"/>
</dbReference>
<dbReference type="SUPFAM" id="SSF54236">
    <property type="entry name" value="Ubiquitin-like"/>
    <property type="match status" value="1"/>
</dbReference>
<evidence type="ECO:0000250" key="1">
    <source>
        <dbReference type="UniProtKB" id="Q62625"/>
    </source>
</evidence>
<evidence type="ECO:0000250" key="2">
    <source>
        <dbReference type="UniProtKB" id="Q91VR7"/>
    </source>
</evidence>
<evidence type="ECO:0000250" key="3">
    <source>
        <dbReference type="UniProtKB" id="Q9H492"/>
    </source>
</evidence>
<evidence type="ECO:0000305" key="4"/>
<keyword id="KW-0072">Autophagy</keyword>
<keyword id="KW-0963">Cytoplasm</keyword>
<keyword id="KW-0968">Cytoplasmic vesicle</keyword>
<keyword id="KW-0206">Cytoskeleton</keyword>
<keyword id="KW-0449">Lipoprotein</keyword>
<keyword id="KW-0472">Membrane</keyword>
<keyword id="KW-0493">Microtubule</keyword>
<keyword id="KW-0597">Phosphoprotein</keyword>
<keyword id="KW-1185">Reference proteome</keyword>
<keyword id="KW-0833">Ubl conjugation pathway</keyword>
<gene>
    <name evidence="3" type="primary">MAP1LC3A</name>
</gene>
<protein>
    <recommendedName>
        <fullName>Microtubule-associated protein 1 light chain 3 alpha</fullName>
    </recommendedName>
    <alternativeName>
        <fullName>Autophagy-related protein LC3 A</fullName>
    </alternativeName>
    <alternativeName>
        <fullName>Autophagy-related ubiquitin-like modifier LC3 A</fullName>
    </alternativeName>
    <alternativeName>
        <fullName>MAP1 light chain 3-like protein 1</fullName>
    </alternativeName>
    <alternativeName>
        <fullName evidence="3">Microtubule-associated proteins 1A/1B light chain 3A</fullName>
        <shortName>MAP1A/MAP1B LC3 A</shortName>
        <shortName>MAP1A/MAP1B light chain 3 A</shortName>
    </alternativeName>
</protein>
<sequence length="121" mass="14286">MPSDRPFKQRRSFADRCKEVQQIREQHPSKIPVIIERYKGEKQLPVLDKTKFLVPDHVNMSELVKIIRRRLQLNPTQAFFLLVNQHSMVSVSTPIADIYEQEKDEDGFLYMVYASQETFGF</sequence>
<feature type="chain" id="PRO_0000286935" description="Microtubule-associated protein 1 light chain 3 alpha">
    <location>
        <begin position="1"/>
        <end position="120"/>
    </location>
</feature>
<feature type="propeptide" id="PRO_0000286936" description="Removed in mature form" evidence="4">
    <location>
        <position position="121"/>
    </location>
</feature>
<feature type="region of interest" description="Important for interaction with ATG13 and for autophagosome formation" evidence="3">
    <location>
        <begin position="49"/>
        <end position="53"/>
    </location>
</feature>
<feature type="site" description="Cleavage; by ATG4B" evidence="3">
    <location>
        <begin position="120"/>
        <end position="121"/>
    </location>
</feature>
<feature type="modified residue" description="Phosphoserine; by PKA" evidence="3">
    <location>
        <position position="12"/>
    </location>
</feature>
<feature type="lipid moiety-binding region" description="Phosphatidylethanolamine amidated glycine; alternate" evidence="3">
    <location>
        <position position="120"/>
    </location>
</feature>
<feature type="lipid moiety-binding region" description="Phosphatidylserine amidated glycine; alternate" evidence="3">
    <location>
        <position position="120"/>
    </location>
</feature>